<dbReference type="EC" id="7.1.1.-" evidence="1"/>
<dbReference type="EMBL" id="CP000390">
    <property type="protein sequence ID" value="ABG62421.1"/>
    <property type="molecule type" value="Genomic_DNA"/>
</dbReference>
<dbReference type="SMR" id="Q11JK4"/>
<dbReference type="STRING" id="266779.Meso_1024"/>
<dbReference type="KEGG" id="mes:Meso_1024"/>
<dbReference type="eggNOG" id="COG0852">
    <property type="taxonomic scope" value="Bacteria"/>
</dbReference>
<dbReference type="HOGENOM" id="CLU_042628_2_1_5"/>
<dbReference type="OrthoDB" id="9803286at2"/>
<dbReference type="GO" id="GO:0005886">
    <property type="term" value="C:plasma membrane"/>
    <property type="evidence" value="ECO:0007669"/>
    <property type="project" value="UniProtKB-SubCell"/>
</dbReference>
<dbReference type="GO" id="GO:0008137">
    <property type="term" value="F:NADH dehydrogenase (ubiquinone) activity"/>
    <property type="evidence" value="ECO:0007669"/>
    <property type="project" value="InterPro"/>
</dbReference>
<dbReference type="GO" id="GO:0050136">
    <property type="term" value="F:NADH:ubiquinone reductase (non-electrogenic) activity"/>
    <property type="evidence" value="ECO:0007669"/>
    <property type="project" value="UniProtKB-UniRule"/>
</dbReference>
<dbReference type="GO" id="GO:0048038">
    <property type="term" value="F:quinone binding"/>
    <property type="evidence" value="ECO:0007669"/>
    <property type="project" value="UniProtKB-KW"/>
</dbReference>
<dbReference type="FunFam" id="3.30.460.80:FF:000002">
    <property type="entry name" value="NADH dehydrogenase iron-sulfur protein 3, mitochondrial"/>
    <property type="match status" value="1"/>
</dbReference>
<dbReference type="Gene3D" id="3.30.460.80">
    <property type="entry name" value="NADH:ubiquinone oxidoreductase, 30kDa subunit"/>
    <property type="match status" value="1"/>
</dbReference>
<dbReference type="HAMAP" id="MF_01357">
    <property type="entry name" value="NDH1_NuoC"/>
    <property type="match status" value="1"/>
</dbReference>
<dbReference type="InterPro" id="IPR010218">
    <property type="entry name" value="NADH_DH_suC"/>
</dbReference>
<dbReference type="InterPro" id="IPR037232">
    <property type="entry name" value="NADH_quin_OxRdtase_su_C/D-like"/>
</dbReference>
<dbReference type="InterPro" id="IPR001268">
    <property type="entry name" value="NADH_UbQ_OxRdtase_30kDa_su"/>
</dbReference>
<dbReference type="InterPro" id="IPR020396">
    <property type="entry name" value="NADH_UbQ_OxRdtase_CS"/>
</dbReference>
<dbReference type="NCBIfam" id="TIGR01961">
    <property type="entry name" value="NuoC_fam"/>
    <property type="match status" value="1"/>
</dbReference>
<dbReference type="NCBIfam" id="NF004730">
    <property type="entry name" value="PRK06074.1-1"/>
    <property type="match status" value="1"/>
</dbReference>
<dbReference type="NCBIfam" id="NF004733">
    <property type="entry name" value="PRK06074.1-5"/>
    <property type="match status" value="1"/>
</dbReference>
<dbReference type="PANTHER" id="PTHR10884:SF14">
    <property type="entry name" value="NADH DEHYDROGENASE [UBIQUINONE] IRON-SULFUR PROTEIN 3, MITOCHONDRIAL"/>
    <property type="match status" value="1"/>
</dbReference>
<dbReference type="PANTHER" id="PTHR10884">
    <property type="entry name" value="NADH DEHYDROGENASE UBIQUINONE IRON-SULFUR PROTEIN 3"/>
    <property type="match status" value="1"/>
</dbReference>
<dbReference type="Pfam" id="PF00329">
    <property type="entry name" value="Complex1_30kDa"/>
    <property type="match status" value="1"/>
</dbReference>
<dbReference type="SUPFAM" id="SSF143243">
    <property type="entry name" value="Nqo5-like"/>
    <property type="match status" value="1"/>
</dbReference>
<dbReference type="PROSITE" id="PS00542">
    <property type="entry name" value="COMPLEX1_30K"/>
    <property type="match status" value="1"/>
</dbReference>
<proteinExistence type="inferred from homology"/>
<keyword id="KW-0997">Cell inner membrane</keyword>
<keyword id="KW-1003">Cell membrane</keyword>
<keyword id="KW-0472">Membrane</keyword>
<keyword id="KW-0520">NAD</keyword>
<keyword id="KW-0874">Quinone</keyword>
<keyword id="KW-1278">Translocase</keyword>
<keyword id="KW-0813">Transport</keyword>
<keyword id="KW-0830">Ubiquinone</keyword>
<protein>
    <recommendedName>
        <fullName evidence="1">NADH-quinone oxidoreductase subunit C</fullName>
        <ecNumber evidence="1">7.1.1.-</ecNumber>
    </recommendedName>
    <alternativeName>
        <fullName evidence="1">NADH dehydrogenase I subunit C</fullName>
    </alternativeName>
    <alternativeName>
        <fullName evidence="1">NDH-1 subunit C</fullName>
    </alternativeName>
</protein>
<gene>
    <name evidence="1" type="primary">nuoC</name>
    <name type="ordered locus">Meso_1024</name>
</gene>
<accession>Q11JK4</accession>
<feature type="chain" id="PRO_0000358122" description="NADH-quinone oxidoreductase subunit C">
    <location>
        <begin position="1"/>
        <end position="200"/>
    </location>
</feature>
<evidence type="ECO:0000255" key="1">
    <source>
        <dbReference type="HAMAP-Rule" id="MF_01357"/>
    </source>
</evidence>
<organism>
    <name type="scientific">Chelativorans sp. (strain BNC1)</name>
    <dbReference type="NCBI Taxonomy" id="266779"/>
    <lineage>
        <taxon>Bacteria</taxon>
        <taxon>Pseudomonadati</taxon>
        <taxon>Pseudomonadota</taxon>
        <taxon>Alphaproteobacteria</taxon>
        <taxon>Hyphomicrobiales</taxon>
        <taxon>Phyllobacteriaceae</taxon>
        <taxon>Chelativorans</taxon>
    </lineage>
</organism>
<name>NUOC_CHESB</name>
<sequence>MNEALRDLAGYIKEKLDGRVQDWMVAYDELTIFVEPGDIVDVLTFLKSDVQCQFFAFVDISGVDYPARERRFEVVYHLLSPRQNQRIRVKVSTDEETPIPSVIEVFPAANWYEREIYDLYGVLFTEHPDLRRILTDYGFEGHPLRKDFPLTGFVEVHYDDEAKRVVYQPVNLRQEFRNFDFLSPWEGTDYVLPGDEKAKQ</sequence>
<reference key="1">
    <citation type="submission" date="2006-06" db="EMBL/GenBank/DDBJ databases">
        <title>Complete sequence of chromosome of Mesorhizobium sp. BNC1.</title>
        <authorList>
            <consortium name="US DOE Joint Genome Institute"/>
            <person name="Copeland A."/>
            <person name="Lucas S."/>
            <person name="Lapidus A."/>
            <person name="Barry K."/>
            <person name="Detter J.C."/>
            <person name="Glavina del Rio T."/>
            <person name="Hammon N."/>
            <person name="Israni S."/>
            <person name="Dalin E."/>
            <person name="Tice H."/>
            <person name="Pitluck S."/>
            <person name="Chertkov O."/>
            <person name="Brettin T."/>
            <person name="Bruce D."/>
            <person name="Han C."/>
            <person name="Tapia R."/>
            <person name="Gilna P."/>
            <person name="Schmutz J."/>
            <person name="Larimer F."/>
            <person name="Land M."/>
            <person name="Hauser L."/>
            <person name="Kyrpides N."/>
            <person name="Mikhailova N."/>
            <person name="Richardson P."/>
        </authorList>
    </citation>
    <scope>NUCLEOTIDE SEQUENCE [LARGE SCALE GENOMIC DNA]</scope>
    <source>
        <strain>BNC1</strain>
    </source>
</reference>
<comment type="function">
    <text evidence="1">NDH-1 shuttles electrons from NADH, via FMN and iron-sulfur (Fe-S) centers, to quinones in the respiratory chain. The immediate electron acceptor for the enzyme in this species is believed to be ubiquinone. Couples the redox reaction to proton translocation (for every two electrons transferred, four hydrogen ions are translocated across the cytoplasmic membrane), and thus conserves the redox energy in a proton gradient.</text>
</comment>
<comment type="catalytic activity">
    <reaction evidence="1">
        <text>a quinone + NADH + 5 H(+)(in) = a quinol + NAD(+) + 4 H(+)(out)</text>
        <dbReference type="Rhea" id="RHEA:57888"/>
        <dbReference type="ChEBI" id="CHEBI:15378"/>
        <dbReference type="ChEBI" id="CHEBI:24646"/>
        <dbReference type="ChEBI" id="CHEBI:57540"/>
        <dbReference type="ChEBI" id="CHEBI:57945"/>
        <dbReference type="ChEBI" id="CHEBI:132124"/>
    </reaction>
</comment>
<comment type="subunit">
    <text evidence="1">NDH-1 is composed of 14 different subunits. Subunits NuoB, C, D, E, F, and G constitute the peripheral sector of the complex.</text>
</comment>
<comment type="subcellular location">
    <subcellularLocation>
        <location evidence="1">Cell inner membrane</location>
        <topology evidence="1">Peripheral membrane protein</topology>
        <orientation evidence="1">Cytoplasmic side</orientation>
    </subcellularLocation>
</comment>
<comment type="similarity">
    <text evidence="1">Belongs to the complex I 30 kDa subunit family.</text>
</comment>